<feature type="chain" id="PRO_0000208481" description="DNA-binding transcriptional activator HetR">
    <location>
        <begin position="1"/>
        <end position="298"/>
    </location>
</feature>
<feature type="active site" evidence="1">
    <location>
        <position position="152"/>
    </location>
</feature>
<feature type="disulfide bond" description="Interchain" evidence="1">
    <location>
        <position position="48"/>
    </location>
</feature>
<comment type="function">
    <text evidence="1">Controls heterocyst differentiation. Dimerization is required for DNA-binding. Has both a protease and a DNA-binding activity.</text>
</comment>
<comment type="subunit">
    <text evidence="1">Homodimer; disulfide-linked.</text>
</comment>
<comment type="similarity">
    <text evidence="1">Belongs to the peptidase S48 family.</text>
</comment>
<evidence type="ECO:0000255" key="1">
    <source>
        <dbReference type="HAMAP-Rule" id="MF_00781"/>
    </source>
</evidence>
<keyword id="KW-0010">Activator</keyword>
<keyword id="KW-1015">Disulfide bond</keyword>
<keyword id="KW-0238">DNA-binding</keyword>
<keyword id="KW-0364">Heterocyst</keyword>
<keyword id="KW-0378">Hydrolase</keyword>
<keyword id="KW-0645">Protease</keyword>
<keyword id="KW-0720">Serine protease</keyword>
<keyword id="KW-0804">Transcription</keyword>
<keyword id="KW-0805">Transcription regulation</keyword>
<organism>
    <name type="scientific">Nostoc sp. (strain PCC 9229)</name>
    <dbReference type="NCBI Taxonomy" id="70817"/>
    <lineage>
        <taxon>Bacteria</taxon>
        <taxon>Bacillati</taxon>
        <taxon>Cyanobacteriota</taxon>
        <taxon>Cyanophyceae</taxon>
        <taxon>Nostocales</taxon>
        <taxon>Nostocaceae</taxon>
        <taxon>Nostoc</taxon>
    </lineage>
</organism>
<name>HETR_NOSS9</name>
<gene>
    <name evidence="1" type="primary">hetR</name>
</gene>
<protein>
    <recommendedName>
        <fullName evidence="1">DNA-binding transcriptional activator HetR</fullName>
        <ecNumber evidence="1">3.4.21.-</ecNumber>
    </recommendedName>
    <alternativeName>
        <fullName evidence="1">Heterocyst differentiation control protein</fullName>
    </alternativeName>
</protein>
<accession>Q51320</accession>
<dbReference type="EC" id="3.4.21.-" evidence="1"/>
<dbReference type="EMBL" id="X92989">
    <property type="protein sequence ID" value="CAA63577.1"/>
    <property type="molecule type" value="Genomic_DNA"/>
</dbReference>
<dbReference type="SMR" id="Q51320"/>
<dbReference type="MEROPS" id="S48.001"/>
<dbReference type="GO" id="GO:0003677">
    <property type="term" value="F:DNA binding"/>
    <property type="evidence" value="ECO:0007669"/>
    <property type="project" value="UniProtKB-UniRule"/>
</dbReference>
<dbReference type="GO" id="GO:0004252">
    <property type="term" value="F:serine-type endopeptidase activity"/>
    <property type="evidence" value="ECO:0007669"/>
    <property type="project" value="UniProtKB-UniRule"/>
</dbReference>
<dbReference type="GO" id="GO:0043158">
    <property type="term" value="P:heterocyst development"/>
    <property type="evidence" value="ECO:0007669"/>
    <property type="project" value="UniProtKB-UniRule"/>
</dbReference>
<dbReference type="GO" id="GO:0006508">
    <property type="term" value="P:proteolysis"/>
    <property type="evidence" value="ECO:0007669"/>
    <property type="project" value="UniProtKB-KW"/>
</dbReference>
<dbReference type="Gene3D" id="6.10.250.2740">
    <property type="match status" value="1"/>
</dbReference>
<dbReference type="Gene3D" id="1.10.10.1670">
    <property type="entry name" value="HetR, flap domain"/>
    <property type="match status" value="1"/>
</dbReference>
<dbReference type="Gene3D" id="1.10.10.1680">
    <property type="entry name" value="HetR, N-terminal DNA-binding domain"/>
    <property type="match status" value="1"/>
</dbReference>
<dbReference type="HAMAP" id="MF_00781">
    <property type="entry name" value="HetR"/>
    <property type="match status" value="1"/>
</dbReference>
<dbReference type="InterPro" id="IPR040949">
    <property type="entry name" value="HetR_C"/>
</dbReference>
<dbReference type="InterPro" id="IPR041936">
    <property type="entry name" value="HetR_DNA-bd_N"/>
</dbReference>
<dbReference type="InterPro" id="IPR041935">
    <property type="entry name" value="HetR_flap"/>
</dbReference>
<dbReference type="InterPro" id="IPR005319">
    <property type="entry name" value="Pept_S48_HetR"/>
</dbReference>
<dbReference type="NCBIfam" id="NF009718">
    <property type="entry name" value="PRK13245.1"/>
    <property type="match status" value="1"/>
</dbReference>
<dbReference type="Pfam" id="PF18460">
    <property type="entry name" value="HetR_C"/>
    <property type="match status" value="1"/>
</dbReference>
<dbReference type="Pfam" id="PF03574">
    <property type="entry name" value="Peptidase_S48"/>
    <property type="match status" value="1"/>
</dbReference>
<proteinExistence type="inferred from homology"/>
<sequence>MSNDIDLINRLGPSAMDQDHAYLAFSAMRTSGHRHGAFLDAAATAAKCAIYMTYLEQGQNLRMTGHLHHLEPKRVKIIVEEVRQALTEGKLLKMLGSQEPRYLIQLPYVWLEKYPWQPGRSRVPGTSLTSEEKRQIEQKLPSNLPDAQLVSSFEFLDLIEFLHKRSQEDLPPEHQMPLSQALGEHIKRRLLYSGTVTRIDSPWGMPFYALTRPFYAPADDQERTYIMVEDTARYFRMMKNWAERRRNAMRLLEELDILPENGASYEELDEVIRAWADKYHQDGGIAVVLQTAFGERED</sequence>
<reference key="1">
    <citation type="submission" date="1995-11" db="EMBL/GenBank/DDBJ databases">
        <title>The hetR gene, required for heterocyst differentiation from a symbiotic cyanobacterium Nostoc sp. PCC 9229: cloning, sequencing and expression.</title>
        <authorList>
            <person name="Matveyev A.V."/>
            <person name="Lotti F."/>
            <person name="Bergman B."/>
        </authorList>
    </citation>
    <scope>NUCLEOTIDE SEQUENCE [GENOMIC DNA]</scope>
</reference>